<organism>
    <name type="scientific">Serratia proteamaculans (strain 568)</name>
    <dbReference type="NCBI Taxonomy" id="399741"/>
    <lineage>
        <taxon>Bacteria</taxon>
        <taxon>Pseudomonadati</taxon>
        <taxon>Pseudomonadota</taxon>
        <taxon>Gammaproteobacteria</taxon>
        <taxon>Enterobacterales</taxon>
        <taxon>Yersiniaceae</taxon>
        <taxon>Serratia</taxon>
    </lineage>
</organism>
<evidence type="ECO:0000255" key="1">
    <source>
        <dbReference type="HAMAP-Rule" id="MF_00532"/>
    </source>
</evidence>
<evidence type="ECO:0000305" key="2"/>
<dbReference type="EMBL" id="CP000826">
    <property type="protein sequence ID" value="ABV43442.1"/>
    <property type="molecule type" value="Genomic_DNA"/>
</dbReference>
<dbReference type="SMR" id="A8GK02"/>
<dbReference type="STRING" id="399741.Spro_4348"/>
<dbReference type="KEGG" id="spe:Spro_4348"/>
<dbReference type="eggNOG" id="COG0103">
    <property type="taxonomic scope" value="Bacteria"/>
</dbReference>
<dbReference type="HOGENOM" id="CLU_046483_2_1_6"/>
<dbReference type="OrthoDB" id="9803965at2"/>
<dbReference type="GO" id="GO:0022627">
    <property type="term" value="C:cytosolic small ribosomal subunit"/>
    <property type="evidence" value="ECO:0007669"/>
    <property type="project" value="TreeGrafter"/>
</dbReference>
<dbReference type="GO" id="GO:0003723">
    <property type="term" value="F:RNA binding"/>
    <property type="evidence" value="ECO:0007669"/>
    <property type="project" value="TreeGrafter"/>
</dbReference>
<dbReference type="GO" id="GO:0003735">
    <property type="term" value="F:structural constituent of ribosome"/>
    <property type="evidence" value="ECO:0007669"/>
    <property type="project" value="InterPro"/>
</dbReference>
<dbReference type="GO" id="GO:0006412">
    <property type="term" value="P:translation"/>
    <property type="evidence" value="ECO:0007669"/>
    <property type="project" value="UniProtKB-UniRule"/>
</dbReference>
<dbReference type="FunFam" id="3.30.230.10:FF:000001">
    <property type="entry name" value="30S ribosomal protein S9"/>
    <property type="match status" value="1"/>
</dbReference>
<dbReference type="Gene3D" id="3.30.230.10">
    <property type="match status" value="1"/>
</dbReference>
<dbReference type="HAMAP" id="MF_00532_B">
    <property type="entry name" value="Ribosomal_uS9_B"/>
    <property type="match status" value="1"/>
</dbReference>
<dbReference type="InterPro" id="IPR020568">
    <property type="entry name" value="Ribosomal_Su5_D2-typ_SF"/>
</dbReference>
<dbReference type="InterPro" id="IPR000754">
    <property type="entry name" value="Ribosomal_uS9"/>
</dbReference>
<dbReference type="InterPro" id="IPR023035">
    <property type="entry name" value="Ribosomal_uS9_bac/plastid"/>
</dbReference>
<dbReference type="InterPro" id="IPR020574">
    <property type="entry name" value="Ribosomal_uS9_CS"/>
</dbReference>
<dbReference type="InterPro" id="IPR014721">
    <property type="entry name" value="Ribsml_uS5_D2-typ_fold_subgr"/>
</dbReference>
<dbReference type="NCBIfam" id="NF001099">
    <property type="entry name" value="PRK00132.1"/>
    <property type="match status" value="1"/>
</dbReference>
<dbReference type="PANTHER" id="PTHR21569">
    <property type="entry name" value="RIBOSOMAL PROTEIN S9"/>
    <property type="match status" value="1"/>
</dbReference>
<dbReference type="PANTHER" id="PTHR21569:SF1">
    <property type="entry name" value="SMALL RIBOSOMAL SUBUNIT PROTEIN US9M"/>
    <property type="match status" value="1"/>
</dbReference>
<dbReference type="Pfam" id="PF00380">
    <property type="entry name" value="Ribosomal_S9"/>
    <property type="match status" value="1"/>
</dbReference>
<dbReference type="SUPFAM" id="SSF54211">
    <property type="entry name" value="Ribosomal protein S5 domain 2-like"/>
    <property type="match status" value="1"/>
</dbReference>
<dbReference type="PROSITE" id="PS00360">
    <property type="entry name" value="RIBOSOMAL_S9"/>
    <property type="match status" value="1"/>
</dbReference>
<accession>A8GK02</accession>
<name>RS9_SERP5</name>
<reference key="1">
    <citation type="submission" date="2007-09" db="EMBL/GenBank/DDBJ databases">
        <title>Complete sequence of chromosome of Serratia proteamaculans 568.</title>
        <authorList>
            <consortium name="US DOE Joint Genome Institute"/>
            <person name="Copeland A."/>
            <person name="Lucas S."/>
            <person name="Lapidus A."/>
            <person name="Barry K."/>
            <person name="Glavina del Rio T."/>
            <person name="Dalin E."/>
            <person name="Tice H."/>
            <person name="Pitluck S."/>
            <person name="Chain P."/>
            <person name="Malfatti S."/>
            <person name="Shin M."/>
            <person name="Vergez L."/>
            <person name="Schmutz J."/>
            <person name="Larimer F."/>
            <person name="Land M."/>
            <person name="Hauser L."/>
            <person name="Kyrpides N."/>
            <person name="Kim E."/>
            <person name="Taghavi S."/>
            <person name="Newman L."/>
            <person name="Vangronsveld J."/>
            <person name="van der Lelie D."/>
            <person name="Richardson P."/>
        </authorList>
    </citation>
    <scope>NUCLEOTIDE SEQUENCE [LARGE SCALE GENOMIC DNA]</scope>
    <source>
        <strain>568</strain>
    </source>
</reference>
<feature type="chain" id="PRO_1000061013" description="Small ribosomal subunit protein uS9">
    <location>
        <begin position="1"/>
        <end position="130"/>
    </location>
</feature>
<sequence length="130" mass="14763">MAENQYYGTGRRKSSAARVFIKPGSGNIVINQRSLEQYFGRETARMVVRQPLELTDMVGKFDLYITVKGGGISGQAGAIRHGITRALMEYDETLRGELRKAGFVTRDARQVERKKVGLRKARRRPQFSKR</sequence>
<gene>
    <name evidence="1" type="primary">rpsI</name>
    <name type="ordered locus">Spro_4348</name>
</gene>
<proteinExistence type="inferred from homology"/>
<protein>
    <recommendedName>
        <fullName evidence="1">Small ribosomal subunit protein uS9</fullName>
    </recommendedName>
    <alternativeName>
        <fullName evidence="2">30S ribosomal protein S9</fullName>
    </alternativeName>
</protein>
<keyword id="KW-0687">Ribonucleoprotein</keyword>
<keyword id="KW-0689">Ribosomal protein</keyword>
<comment type="similarity">
    <text evidence="1">Belongs to the universal ribosomal protein uS9 family.</text>
</comment>